<keyword id="KW-0963">Cytoplasm</keyword>
<keyword id="KW-0378">Hydrolase</keyword>
<keyword id="KW-1185">Reference proteome</keyword>
<keyword id="KW-0694">RNA-binding</keyword>
<keyword id="KW-0820">tRNA-binding</keyword>
<proteinExistence type="inferred from homology"/>
<dbReference type="EC" id="3.1.1.29" evidence="1"/>
<dbReference type="EMBL" id="CP000868">
    <property type="protein sequence ID" value="ABX14206.1"/>
    <property type="molecule type" value="Genomic_DNA"/>
</dbReference>
<dbReference type="EMBL" id="AP009385">
    <property type="protein sequence ID" value="BAG44637.1"/>
    <property type="molecule type" value="Genomic_DNA"/>
</dbReference>
<dbReference type="RefSeq" id="WP_006398241.1">
    <property type="nucleotide sequence ID" value="NC_010804.1"/>
</dbReference>
<dbReference type="SMR" id="A9AEY6"/>
<dbReference type="STRING" id="395019.BMULJ_02749"/>
<dbReference type="GeneID" id="89571335"/>
<dbReference type="KEGG" id="bmj:BMULJ_02749"/>
<dbReference type="KEGG" id="bmu:Bmul_0511"/>
<dbReference type="eggNOG" id="COG0193">
    <property type="taxonomic scope" value="Bacteria"/>
</dbReference>
<dbReference type="HOGENOM" id="CLU_062456_3_1_4"/>
<dbReference type="Proteomes" id="UP000008815">
    <property type="component" value="Chromosome 1"/>
</dbReference>
<dbReference type="GO" id="GO:0005737">
    <property type="term" value="C:cytoplasm"/>
    <property type="evidence" value="ECO:0007669"/>
    <property type="project" value="UniProtKB-SubCell"/>
</dbReference>
<dbReference type="GO" id="GO:0004045">
    <property type="term" value="F:peptidyl-tRNA hydrolase activity"/>
    <property type="evidence" value="ECO:0007669"/>
    <property type="project" value="UniProtKB-UniRule"/>
</dbReference>
<dbReference type="GO" id="GO:0000049">
    <property type="term" value="F:tRNA binding"/>
    <property type="evidence" value="ECO:0007669"/>
    <property type="project" value="UniProtKB-UniRule"/>
</dbReference>
<dbReference type="GO" id="GO:0006515">
    <property type="term" value="P:protein quality control for misfolded or incompletely synthesized proteins"/>
    <property type="evidence" value="ECO:0007669"/>
    <property type="project" value="UniProtKB-UniRule"/>
</dbReference>
<dbReference type="GO" id="GO:0072344">
    <property type="term" value="P:rescue of stalled ribosome"/>
    <property type="evidence" value="ECO:0007669"/>
    <property type="project" value="UniProtKB-UniRule"/>
</dbReference>
<dbReference type="CDD" id="cd00462">
    <property type="entry name" value="PTH"/>
    <property type="match status" value="1"/>
</dbReference>
<dbReference type="FunFam" id="3.40.50.1470:FF:000001">
    <property type="entry name" value="Peptidyl-tRNA hydrolase"/>
    <property type="match status" value="1"/>
</dbReference>
<dbReference type="Gene3D" id="3.40.50.1470">
    <property type="entry name" value="Peptidyl-tRNA hydrolase"/>
    <property type="match status" value="1"/>
</dbReference>
<dbReference type="HAMAP" id="MF_00083">
    <property type="entry name" value="Pept_tRNA_hydro_bact"/>
    <property type="match status" value="1"/>
</dbReference>
<dbReference type="InterPro" id="IPR001328">
    <property type="entry name" value="Pept_tRNA_hydro"/>
</dbReference>
<dbReference type="InterPro" id="IPR018171">
    <property type="entry name" value="Pept_tRNA_hydro_CS"/>
</dbReference>
<dbReference type="InterPro" id="IPR036416">
    <property type="entry name" value="Pept_tRNA_hydro_sf"/>
</dbReference>
<dbReference type="NCBIfam" id="TIGR00447">
    <property type="entry name" value="pth"/>
    <property type="match status" value="1"/>
</dbReference>
<dbReference type="PANTHER" id="PTHR17224">
    <property type="entry name" value="PEPTIDYL-TRNA HYDROLASE"/>
    <property type="match status" value="1"/>
</dbReference>
<dbReference type="PANTHER" id="PTHR17224:SF1">
    <property type="entry name" value="PEPTIDYL-TRNA HYDROLASE"/>
    <property type="match status" value="1"/>
</dbReference>
<dbReference type="Pfam" id="PF01195">
    <property type="entry name" value="Pept_tRNA_hydro"/>
    <property type="match status" value="1"/>
</dbReference>
<dbReference type="SUPFAM" id="SSF53178">
    <property type="entry name" value="Peptidyl-tRNA hydrolase-like"/>
    <property type="match status" value="1"/>
</dbReference>
<dbReference type="PROSITE" id="PS01195">
    <property type="entry name" value="PEPT_TRNA_HYDROL_1"/>
    <property type="match status" value="1"/>
</dbReference>
<dbReference type="PROSITE" id="PS01196">
    <property type="entry name" value="PEPT_TRNA_HYDROL_2"/>
    <property type="match status" value="1"/>
</dbReference>
<organism>
    <name type="scientific">Burkholderia multivorans (strain ATCC 17616 / 249)</name>
    <dbReference type="NCBI Taxonomy" id="395019"/>
    <lineage>
        <taxon>Bacteria</taxon>
        <taxon>Pseudomonadati</taxon>
        <taxon>Pseudomonadota</taxon>
        <taxon>Betaproteobacteria</taxon>
        <taxon>Burkholderiales</taxon>
        <taxon>Burkholderiaceae</taxon>
        <taxon>Burkholderia</taxon>
        <taxon>Burkholderia cepacia complex</taxon>
    </lineage>
</organism>
<comment type="function">
    <text evidence="1">Hydrolyzes ribosome-free peptidyl-tRNAs (with 1 or more amino acids incorporated), which drop off the ribosome during protein synthesis, or as a result of ribosome stalling.</text>
</comment>
<comment type="function">
    <text evidence="1">Catalyzes the release of premature peptidyl moieties from peptidyl-tRNA molecules trapped in stalled 50S ribosomal subunits, and thus maintains levels of free tRNAs and 50S ribosomes.</text>
</comment>
<comment type="catalytic activity">
    <reaction evidence="1">
        <text>an N-acyl-L-alpha-aminoacyl-tRNA + H2O = an N-acyl-L-amino acid + a tRNA + H(+)</text>
        <dbReference type="Rhea" id="RHEA:54448"/>
        <dbReference type="Rhea" id="RHEA-COMP:10123"/>
        <dbReference type="Rhea" id="RHEA-COMP:13883"/>
        <dbReference type="ChEBI" id="CHEBI:15377"/>
        <dbReference type="ChEBI" id="CHEBI:15378"/>
        <dbReference type="ChEBI" id="CHEBI:59874"/>
        <dbReference type="ChEBI" id="CHEBI:78442"/>
        <dbReference type="ChEBI" id="CHEBI:138191"/>
        <dbReference type="EC" id="3.1.1.29"/>
    </reaction>
</comment>
<comment type="subunit">
    <text evidence="1">Monomer.</text>
</comment>
<comment type="subcellular location">
    <subcellularLocation>
        <location evidence="1">Cytoplasm</location>
    </subcellularLocation>
</comment>
<comment type="similarity">
    <text evidence="1">Belongs to the PTH family.</text>
</comment>
<feature type="chain" id="PRO_1000092919" description="Peptidyl-tRNA hydrolase">
    <location>
        <begin position="1"/>
        <end position="199"/>
    </location>
</feature>
<feature type="active site" description="Proton acceptor" evidence="1">
    <location>
        <position position="20"/>
    </location>
</feature>
<feature type="binding site" evidence="1">
    <location>
        <position position="15"/>
    </location>
    <ligand>
        <name>tRNA</name>
        <dbReference type="ChEBI" id="CHEBI:17843"/>
    </ligand>
</feature>
<feature type="binding site" evidence="1">
    <location>
        <position position="66"/>
    </location>
    <ligand>
        <name>tRNA</name>
        <dbReference type="ChEBI" id="CHEBI:17843"/>
    </ligand>
</feature>
<feature type="binding site" evidence="1">
    <location>
        <position position="68"/>
    </location>
    <ligand>
        <name>tRNA</name>
        <dbReference type="ChEBI" id="CHEBI:17843"/>
    </ligand>
</feature>
<feature type="binding site" evidence="1">
    <location>
        <position position="114"/>
    </location>
    <ligand>
        <name>tRNA</name>
        <dbReference type="ChEBI" id="CHEBI:17843"/>
    </ligand>
</feature>
<feature type="site" description="Discriminates between blocked and unblocked aminoacyl-tRNA" evidence="1">
    <location>
        <position position="10"/>
    </location>
</feature>
<feature type="site" description="Stabilizes the basic form of H active site to accept a proton" evidence="1">
    <location>
        <position position="93"/>
    </location>
</feature>
<protein>
    <recommendedName>
        <fullName evidence="1">Peptidyl-tRNA hydrolase</fullName>
        <shortName evidence="1">Pth</shortName>
        <ecNumber evidence="1">3.1.1.29</ecNumber>
    </recommendedName>
</protein>
<reference key="1">
    <citation type="submission" date="2007-10" db="EMBL/GenBank/DDBJ databases">
        <title>Complete sequence of chromosome 1 of Burkholderia multivorans ATCC 17616.</title>
        <authorList>
            <person name="Copeland A."/>
            <person name="Lucas S."/>
            <person name="Lapidus A."/>
            <person name="Barry K."/>
            <person name="Glavina del Rio T."/>
            <person name="Dalin E."/>
            <person name="Tice H."/>
            <person name="Pitluck S."/>
            <person name="Chain P."/>
            <person name="Malfatti S."/>
            <person name="Shin M."/>
            <person name="Vergez L."/>
            <person name="Schmutz J."/>
            <person name="Larimer F."/>
            <person name="Land M."/>
            <person name="Hauser L."/>
            <person name="Kyrpides N."/>
            <person name="Kim E."/>
            <person name="Tiedje J."/>
            <person name="Richardson P."/>
        </authorList>
    </citation>
    <scope>NUCLEOTIDE SEQUENCE [LARGE SCALE GENOMIC DNA]</scope>
    <source>
        <strain>ATCC 17616 / 249</strain>
    </source>
</reference>
<reference key="2">
    <citation type="submission" date="2007-04" db="EMBL/GenBank/DDBJ databases">
        <title>Complete genome sequence of Burkholderia multivorans ATCC 17616.</title>
        <authorList>
            <person name="Ohtsubo Y."/>
            <person name="Yamashita A."/>
            <person name="Kurokawa K."/>
            <person name="Takami H."/>
            <person name="Yuhara S."/>
            <person name="Nishiyama E."/>
            <person name="Endo R."/>
            <person name="Miyazaki R."/>
            <person name="Ono A."/>
            <person name="Yano K."/>
            <person name="Ito M."/>
            <person name="Sota M."/>
            <person name="Yuji N."/>
            <person name="Hattori M."/>
            <person name="Tsuda M."/>
        </authorList>
    </citation>
    <scope>NUCLEOTIDE SEQUENCE [LARGE SCALE GENOMIC DNA]</scope>
    <source>
        <strain>ATCC 17616 / 249</strain>
    </source>
</reference>
<gene>
    <name evidence="1" type="primary">pth</name>
    <name type="ordered locus">Bmul_0511</name>
    <name type="ordered locus">BMULJ_02749</name>
</gene>
<accession>A9AEY6</accession>
<evidence type="ECO:0000255" key="1">
    <source>
        <dbReference type="HAMAP-Rule" id="MF_00083"/>
    </source>
</evidence>
<name>PTH_BURM1</name>
<sequence>MIKLIVGLGNPGAEYTATRHNAGFWLIDQLAREAGATLRDERRFHGFYAKARLYGEEVHLLEPQTYMNRSGQSVVALAHFFKILPDQILVAHDELDLPPGTVKLKLGGGSGGHNGLKDISAHLSSQQYWRLRIGIGHPRDLIPESARAGAKPDVANFVLKPPRREEQDVIDAAIERALAVMPMVVKGELDRATMQLHRN</sequence>